<feature type="chain" id="PRO_1000095617" description="Histidine--tRNA ligase">
    <location>
        <begin position="1"/>
        <end position="424"/>
    </location>
</feature>
<dbReference type="EC" id="6.1.1.21" evidence="1"/>
<dbReference type="EMBL" id="CP000950">
    <property type="protein sequence ID" value="ACA67592.1"/>
    <property type="molecule type" value="Genomic_DNA"/>
</dbReference>
<dbReference type="RefSeq" id="WP_002209816.1">
    <property type="nucleotide sequence ID" value="NZ_CP009792.1"/>
</dbReference>
<dbReference type="SMR" id="B1JS06"/>
<dbReference type="GeneID" id="57975836"/>
<dbReference type="KEGG" id="ypy:YPK_1294"/>
<dbReference type="PATRIC" id="fig|502800.11.peg.1929"/>
<dbReference type="GO" id="GO:0005737">
    <property type="term" value="C:cytoplasm"/>
    <property type="evidence" value="ECO:0007669"/>
    <property type="project" value="UniProtKB-SubCell"/>
</dbReference>
<dbReference type="GO" id="GO:0005524">
    <property type="term" value="F:ATP binding"/>
    <property type="evidence" value="ECO:0007669"/>
    <property type="project" value="UniProtKB-UniRule"/>
</dbReference>
<dbReference type="GO" id="GO:0004821">
    <property type="term" value="F:histidine-tRNA ligase activity"/>
    <property type="evidence" value="ECO:0007669"/>
    <property type="project" value="UniProtKB-UniRule"/>
</dbReference>
<dbReference type="GO" id="GO:0006427">
    <property type="term" value="P:histidyl-tRNA aminoacylation"/>
    <property type="evidence" value="ECO:0007669"/>
    <property type="project" value="UniProtKB-UniRule"/>
</dbReference>
<dbReference type="CDD" id="cd00773">
    <property type="entry name" value="HisRS-like_core"/>
    <property type="match status" value="1"/>
</dbReference>
<dbReference type="CDD" id="cd00859">
    <property type="entry name" value="HisRS_anticodon"/>
    <property type="match status" value="1"/>
</dbReference>
<dbReference type="FunFam" id="3.30.930.10:FF:000005">
    <property type="entry name" value="Histidine--tRNA ligase"/>
    <property type="match status" value="1"/>
</dbReference>
<dbReference type="FunFam" id="3.40.50.800:FF:000007">
    <property type="entry name" value="Histidine--tRNA ligase"/>
    <property type="match status" value="1"/>
</dbReference>
<dbReference type="Gene3D" id="3.40.50.800">
    <property type="entry name" value="Anticodon-binding domain"/>
    <property type="match status" value="1"/>
</dbReference>
<dbReference type="Gene3D" id="3.30.930.10">
    <property type="entry name" value="Bira Bifunctional Protein, Domain 2"/>
    <property type="match status" value="1"/>
</dbReference>
<dbReference type="HAMAP" id="MF_00127">
    <property type="entry name" value="His_tRNA_synth"/>
    <property type="match status" value="1"/>
</dbReference>
<dbReference type="InterPro" id="IPR006195">
    <property type="entry name" value="aa-tRNA-synth_II"/>
</dbReference>
<dbReference type="InterPro" id="IPR045864">
    <property type="entry name" value="aa-tRNA-synth_II/BPL/LPL"/>
</dbReference>
<dbReference type="InterPro" id="IPR004154">
    <property type="entry name" value="Anticodon-bd"/>
</dbReference>
<dbReference type="InterPro" id="IPR036621">
    <property type="entry name" value="Anticodon-bd_dom_sf"/>
</dbReference>
<dbReference type="InterPro" id="IPR015807">
    <property type="entry name" value="His-tRNA-ligase"/>
</dbReference>
<dbReference type="InterPro" id="IPR041715">
    <property type="entry name" value="HisRS-like_core"/>
</dbReference>
<dbReference type="InterPro" id="IPR004516">
    <property type="entry name" value="HisRS/HisZ"/>
</dbReference>
<dbReference type="InterPro" id="IPR033656">
    <property type="entry name" value="HisRS_anticodon"/>
</dbReference>
<dbReference type="NCBIfam" id="TIGR00442">
    <property type="entry name" value="hisS"/>
    <property type="match status" value="1"/>
</dbReference>
<dbReference type="PANTHER" id="PTHR43707:SF1">
    <property type="entry name" value="HISTIDINE--TRNA LIGASE, MITOCHONDRIAL-RELATED"/>
    <property type="match status" value="1"/>
</dbReference>
<dbReference type="PANTHER" id="PTHR43707">
    <property type="entry name" value="HISTIDYL-TRNA SYNTHETASE"/>
    <property type="match status" value="1"/>
</dbReference>
<dbReference type="Pfam" id="PF03129">
    <property type="entry name" value="HGTP_anticodon"/>
    <property type="match status" value="1"/>
</dbReference>
<dbReference type="Pfam" id="PF13393">
    <property type="entry name" value="tRNA-synt_His"/>
    <property type="match status" value="1"/>
</dbReference>
<dbReference type="PIRSF" id="PIRSF001549">
    <property type="entry name" value="His-tRNA_synth"/>
    <property type="match status" value="1"/>
</dbReference>
<dbReference type="SUPFAM" id="SSF52954">
    <property type="entry name" value="Class II aaRS ABD-related"/>
    <property type="match status" value="1"/>
</dbReference>
<dbReference type="SUPFAM" id="SSF55681">
    <property type="entry name" value="Class II aaRS and biotin synthetases"/>
    <property type="match status" value="1"/>
</dbReference>
<dbReference type="PROSITE" id="PS50862">
    <property type="entry name" value="AA_TRNA_LIGASE_II"/>
    <property type="match status" value="1"/>
</dbReference>
<organism>
    <name type="scientific">Yersinia pseudotuberculosis serotype O:3 (strain YPIII)</name>
    <dbReference type="NCBI Taxonomy" id="502800"/>
    <lineage>
        <taxon>Bacteria</taxon>
        <taxon>Pseudomonadati</taxon>
        <taxon>Pseudomonadota</taxon>
        <taxon>Gammaproteobacteria</taxon>
        <taxon>Enterobacterales</taxon>
        <taxon>Yersiniaceae</taxon>
        <taxon>Yersinia</taxon>
    </lineage>
</organism>
<protein>
    <recommendedName>
        <fullName evidence="1">Histidine--tRNA ligase</fullName>
        <ecNumber evidence="1">6.1.1.21</ecNumber>
    </recommendedName>
    <alternativeName>
        <fullName evidence="1">Histidyl-tRNA synthetase</fullName>
        <shortName evidence="1">HisRS</shortName>
    </alternativeName>
</protein>
<comment type="catalytic activity">
    <reaction evidence="1">
        <text>tRNA(His) + L-histidine + ATP = L-histidyl-tRNA(His) + AMP + diphosphate + H(+)</text>
        <dbReference type="Rhea" id="RHEA:17313"/>
        <dbReference type="Rhea" id="RHEA-COMP:9665"/>
        <dbReference type="Rhea" id="RHEA-COMP:9689"/>
        <dbReference type="ChEBI" id="CHEBI:15378"/>
        <dbReference type="ChEBI" id="CHEBI:30616"/>
        <dbReference type="ChEBI" id="CHEBI:33019"/>
        <dbReference type="ChEBI" id="CHEBI:57595"/>
        <dbReference type="ChEBI" id="CHEBI:78442"/>
        <dbReference type="ChEBI" id="CHEBI:78527"/>
        <dbReference type="ChEBI" id="CHEBI:456215"/>
        <dbReference type="EC" id="6.1.1.21"/>
    </reaction>
</comment>
<comment type="subunit">
    <text evidence="1">Homodimer.</text>
</comment>
<comment type="subcellular location">
    <subcellularLocation>
        <location evidence="1">Cytoplasm</location>
    </subcellularLocation>
</comment>
<comment type="similarity">
    <text evidence="1">Belongs to the class-II aminoacyl-tRNA synthetase family.</text>
</comment>
<sequence length="424" mass="47262">MAKNIQAIRGMNDYLPADTAIWQRIESILKQVLSGYGYSEIRMPIVEQTPLFKRAIGEVTDVVEKEMYTFDDRNGESLTLRPEGTAGCVRAGIEHGLLYNQEQRLWYIGPMFRYERPQKGRYRQFHQLGAEVFGLPGPDIDAELILLTARWWRALGIFEHVKLELNSIGSLAARADYREALVAFLEQHVEVLDEDCKRRMYSNPLRVLDSKNPDVQQLLDDAPKLSDYLDEESKQHFAGLCELLDKASIPYTVNERLVRGLDYYNRTVFEWVTHSLGAQGTVCAGGRYDGLVEQLGGRATPAVGFAMGLERLVLLVQAVNADFQVPATVDAYVISSGEGAQSAAMLLAESLRDALPTLKIMTNYGGGNVKKQFTRADKWGARVALMLGESEVAAQQVVVKDLRNGEQETLAQADVAARLALMLG</sequence>
<keyword id="KW-0030">Aminoacyl-tRNA synthetase</keyword>
<keyword id="KW-0067">ATP-binding</keyword>
<keyword id="KW-0963">Cytoplasm</keyword>
<keyword id="KW-0436">Ligase</keyword>
<keyword id="KW-0547">Nucleotide-binding</keyword>
<keyword id="KW-0648">Protein biosynthesis</keyword>
<name>SYH_YERPY</name>
<reference key="1">
    <citation type="submission" date="2008-02" db="EMBL/GenBank/DDBJ databases">
        <title>Complete sequence of Yersinia pseudotuberculosis YPIII.</title>
        <authorList>
            <consortium name="US DOE Joint Genome Institute"/>
            <person name="Copeland A."/>
            <person name="Lucas S."/>
            <person name="Lapidus A."/>
            <person name="Glavina del Rio T."/>
            <person name="Dalin E."/>
            <person name="Tice H."/>
            <person name="Bruce D."/>
            <person name="Goodwin L."/>
            <person name="Pitluck S."/>
            <person name="Munk A.C."/>
            <person name="Brettin T."/>
            <person name="Detter J.C."/>
            <person name="Han C."/>
            <person name="Tapia R."/>
            <person name="Schmutz J."/>
            <person name="Larimer F."/>
            <person name="Land M."/>
            <person name="Hauser L."/>
            <person name="Challacombe J.F."/>
            <person name="Green L."/>
            <person name="Lindler L.E."/>
            <person name="Nikolich M.P."/>
            <person name="Richardson P."/>
        </authorList>
    </citation>
    <scope>NUCLEOTIDE SEQUENCE [LARGE SCALE GENOMIC DNA]</scope>
    <source>
        <strain>YPIII</strain>
    </source>
</reference>
<evidence type="ECO:0000255" key="1">
    <source>
        <dbReference type="HAMAP-Rule" id="MF_00127"/>
    </source>
</evidence>
<proteinExistence type="inferred from homology"/>
<gene>
    <name evidence="1" type="primary">hisS</name>
    <name type="ordered locus">YPK_1294</name>
</gene>
<accession>B1JS06</accession>